<gene>
    <name type="primary">pab1</name>
    <name type="ORF">AO090003000927</name>
</gene>
<evidence type="ECO:0000250" key="1"/>
<evidence type="ECO:0000255" key="2">
    <source>
        <dbReference type="PROSITE-ProRule" id="PRU00176"/>
    </source>
</evidence>
<evidence type="ECO:0000255" key="3">
    <source>
        <dbReference type="PROSITE-ProRule" id="PRU00641"/>
    </source>
</evidence>
<evidence type="ECO:0000256" key="4">
    <source>
        <dbReference type="SAM" id="MobiDB-lite"/>
    </source>
</evidence>
<evidence type="ECO:0000305" key="5"/>
<protein>
    <recommendedName>
        <fullName>Polyadenylate-binding protein, cytoplasmic and nuclear</fullName>
        <shortName>PABP</shortName>
        <shortName>Poly(A)-binding protein</shortName>
    </recommendedName>
    <alternativeName>
        <fullName>Polyadenylate tail-binding protein</fullName>
    </alternativeName>
</protein>
<reference key="1">
    <citation type="journal article" date="2005" name="Nature">
        <title>Genome sequencing and analysis of Aspergillus oryzae.</title>
        <authorList>
            <person name="Machida M."/>
            <person name="Asai K."/>
            <person name="Sano M."/>
            <person name="Tanaka T."/>
            <person name="Kumagai T."/>
            <person name="Terai G."/>
            <person name="Kusumoto K."/>
            <person name="Arima T."/>
            <person name="Akita O."/>
            <person name="Kashiwagi Y."/>
            <person name="Abe K."/>
            <person name="Gomi K."/>
            <person name="Horiuchi H."/>
            <person name="Kitamoto K."/>
            <person name="Kobayashi T."/>
            <person name="Takeuchi M."/>
            <person name="Denning D.W."/>
            <person name="Galagan J.E."/>
            <person name="Nierman W.C."/>
            <person name="Yu J."/>
            <person name="Archer D.B."/>
            <person name="Bennett J.W."/>
            <person name="Bhatnagar D."/>
            <person name="Cleveland T.E."/>
            <person name="Fedorova N.D."/>
            <person name="Gotoh O."/>
            <person name="Horikawa H."/>
            <person name="Hosoyama A."/>
            <person name="Ichinomiya M."/>
            <person name="Igarashi R."/>
            <person name="Iwashita K."/>
            <person name="Juvvadi P.R."/>
            <person name="Kato M."/>
            <person name="Kato Y."/>
            <person name="Kin T."/>
            <person name="Kokubun A."/>
            <person name="Maeda H."/>
            <person name="Maeyama N."/>
            <person name="Maruyama J."/>
            <person name="Nagasaki H."/>
            <person name="Nakajima T."/>
            <person name="Oda K."/>
            <person name="Okada K."/>
            <person name="Paulsen I."/>
            <person name="Sakamoto K."/>
            <person name="Sawano T."/>
            <person name="Takahashi M."/>
            <person name="Takase K."/>
            <person name="Terabayashi Y."/>
            <person name="Wortman J.R."/>
            <person name="Yamada O."/>
            <person name="Yamagata Y."/>
            <person name="Anazawa H."/>
            <person name="Hata Y."/>
            <person name="Koide Y."/>
            <person name="Komori T."/>
            <person name="Koyama Y."/>
            <person name="Minetoki T."/>
            <person name="Suharnan S."/>
            <person name="Tanaka A."/>
            <person name="Isono K."/>
            <person name="Kuhara S."/>
            <person name="Ogasawara N."/>
            <person name="Kikuchi H."/>
        </authorList>
    </citation>
    <scope>NUCLEOTIDE SEQUENCE [LARGE SCALE GENOMIC DNA]</scope>
    <source>
        <strain>ATCC 42149 / RIB 40</strain>
    </source>
</reference>
<name>PABP_ASPOR</name>
<keyword id="KW-0963">Cytoplasm</keyword>
<keyword id="KW-0507">mRNA processing</keyword>
<keyword id="KW-0509">mRNA transport</keyword>
<keyword id="KW-0539">Nucleus</keyword>
<keyword id="KW-1185">Reference proteome</keyword>
<keyword id="KW-0677">Repeat</keyword>
<keyword id="KW-0694">RNA-binding</keyword>
<keyword id="KW-0810">Translation regulation</keyword>
<keyword id="KW-0813">Transport</keyword>
<comment type="function">
    <text evidence="1">Binds the poly(A) tail of mRNA. Appears to be an important mediator of the multiple roles of the poly(A) tail in mRNA biogenesis, stability and translation. In the nucleus, involved in both mRNA cleavage and polyadenylation. Is also required for efficient mRNA export to the cytoplasm. Acts in concert with a poly(A)-specific nuclease (PAN) to affect poly(A) tail shortening, which may occur concomitantly with either nucleocytoplasmic mRNA transport or translational initiation. In the cytoplasm, stimulates translation initiation and regulates mRNA decay through translation termination-coupled poly(A) shortening, probably mediated by PAN (By similarity).</text>
</comment>
<comment type="subcellular location">
    <subcellularLocation>
        <location evidence="1">Cytoplasm</location>
    </subcellularLocation>
    <subcellularLocation>
        <location evidence="1">Nucleus</location>
    </subcellularLocation>
</comment>
<comment type="similarity">
    <text evidence="5">Belongs to the polyadenylate-binding protein type-1 family.</text>
</comment>
<accession>Q2UK72</accession>
<dbReference type="EMBL" id="BA000050">
    <property type="protein sequence ID" value="BAE58043.1"/>
    <property type="molecule type" value="Genomic_DNA"/>
</dbReference>
<dbReference type="RefSeq" id="XP_001820045.1">
    <property type="nucleotide sequence ID" value="XM_001819993.2"/>
</dbReference>
<dbReference type="RefSeq" id="XP_003189588.1">
    <property type="nucleotide sequence ID" value="XM_003189540.1"/>
</dbReference>
<dbReference type="SMR" id="Q2UK72"/>
<dbReference type="STRING" id="510516.Q2UK72"/>
<dbReference type="EnsemblFungi" id="BAE58043">
    <property type="protein sequence ID" value="BAE58043"/>
    <property type="gene ID" value="AO090003000927"/>
</dbReference>
<dbReference type="GeneID" id="5992028"/>
<dbReference type="KEGG" id="aor:AO090003000927"/>
<dbReference type="VEuPathDB" id="FungiDB:AO090003000927"/>
<dbReference type="HOGENOM" id="CLU_012062_22_4_1"/>
<dbReference type="OMA" id="QQPGFMP"/>
<dbReference type="OrthoDB" id="127683at5052"/>
<dbReference type="Proteomes" id="UP000006564">
    <property type="component" value="Chromosome 2"/>
</dbReference>
<dbReference type="GO" id="GO:0010494">
    <property type="term" value="C:cytoplasmic stress granule"/>
    <property type="evidence" value="ECO:0000314"/>
    <property type="project" value="AspGD"/>
</dbReference>
<dbReference type="GO" id="GO:0005634">
    <property type="term" value="C:nucleus"/>
    <property type="evidence" value="ECO:0007669"/>
    <property type="project" value="UniProtKB-SubCell"/>
</dbReference>
<dbReference type="GO" id="GO:0003723">
    <property type="term" value="F:RNA binding"/>
    <property type="evidence" value="ECO:0007669"/>
    <property type="project" value="UniProtKB-KW"/>
</dbReference>
<dbReference type="GO" id="GO:0006397">
    <property type="term" value="P:mRNA processing"/>
    <property type="evidence" value="ECO:0007669"/>
    <property type="project" value="UniProtKB-KW"/>
</dbReference>
<dbReference type="GO" id="GO:0051028">
    <property type="term" value="P:mRNA transport"/>
    <property type="evidence" value="ECO:0007669"/>
    <property type="project" value="UniProtKB-KW"/>
</dbReference>
<dbReference type="GO" id="GO:0006417">
    <property type="term" value="P:regulation of translation"/>
    <property type="evidence" value="ECO:0007669"/>
    <property type="project" value="UniProtKB-KW"/>
</dbReference>
<dbReference type="CDD" id="cd12378">
    <property type="entry name" value="RRM1_I_PABPs"/>
    <property type="match status" value="1"/>
</dbReference>
<dbReference type="CDD" id="cd12379">
    <property type="entry name" value="RRM2_I_PABPs"/>
    <property type="match status" value="1"/>
</dbReference>
<dbReference type="CDD" id="cd12380">
    <property type="entry name" value="RRM3_I_PABPs"/>
    <property type="match status" value="1"/>
</dbReference>
<dbReference type="CDD" id="cd12381">
    <property type="entry name" value="RRM4_I_PABPs"/>
    <property type="match status" value="1"/>
</dbReference>
<dbReference type="FunFam" id="1.10.1900.10:FF:000004">
    <property type="entry name" value="Polyadenylate-binding protein"/>
    <property type="match status" value="1"/>
</dbReference>
<dbReference type="FunFam" id="3.30.70.330:FF:000003">
    <property type="entry name" value="Polyadenylate-binding protein"/>
    <property type="match status" value="1"/>
</dbReference>
<dbReference type="FunFam" id="3.30.70.330:FF:000355">
    <property type="entry name" value="Polyadenylate-binding protein"/>
    <property type="match status" value="1"/>
</dbReference>
<dbReference type="FunFam" id="3.30.70.330:FF:000384">
    <property type="entry name" value="Polyadenylate-binding protein"/>
    <property type="match status" value="1"/>
</dbReference>
<dbReference type="Gene3D" id="3.30.70.330">
    <property type="match status" value="4"/>
</dbReference>
<dbReference type="Gene3D" id="1.10.1900.10">
    <property type="entry name" value="c-terminal domain of poly(a) binding protein"/>
    <property type="match status" value="1"/>
</dbReference>
<dbReference type="InterPro" id="IPR012677">
    <property type="entry name" value="Nucleotide-bd_a/b_plait_sf"/>
</dbReference>
<dbReference type="InterPro" id="IPR036053">
    <property type="entry name" value="PABP-dom"/>
</dbReference>
<dbReference type="InterPro" id="IPR006515">
    <property type="entry name" value="PABP_1234"/>
</dbReference>
<dbReference type="InterPro" id="IPR002004">
    <property type="entry name" value="PABP_HYD_C"/>
</dbReference>
<dbReference type="InterPro" id="IPR034364">
    <property type="entry name" value="PABP_RRM1"/>
</dbReference>
<dbReference type="InterPro" id="IPR035979">
    <property type="entry name" value="RBD_domain_sf"/>
</dbReference>
<dbReference type="InterPro" id="IPR045305">
    <property type="entry name" value="RRM2_I_PABPs"/>
</dbReference>
<dbReference type="InterPro" id="IPR000504">
    <property type="entry name" value="RRM_dom"/>
</dbReference>
<dbReference type="NCBIfam" id="TIGR01628">
    <property type="entry name" value="PABP-1234"/>
    <property type="match status" value="1"/>
</dbReference>
<dbReference type="PANTHER" id="PTHR24012">
    <property type="entry name" value="RNA BINDING PROTEIN"/>
    <property type="match status" value="1"/>
</dbReference>
<dbReference type="Pfam" id="PF00658">
    <property type="entry name" value="MLLE"/>
    <property type="match status" value="1"/>
</dbReference>
<dbReference type="Pfam" id="PF00076">
    <property type="entry name" value="RRM_1"/>
    <property type="match status" value="5"/>
</dbReference>
<dbReference type="SMART" id="SM00517">
    <property type="entry name" value="PolyA"/>
    <property type="match status" value="1"/>
</dbReference>
<dbReference type="SMART" id="SM00360">
    <property type="entry name" value="RRM"/>
    <property type="match status" value="4"/>
</dbReference>
<dbReference type="SUPFAM" id="SSF63570">
    <property type="entry name" value="PABC (PABP) domain"/>
    <property type="match status" value="1"/>
</dbReference>
<dbReference type="SUPFAM" id="SSF54928">
    <property type="entry name" value="RNA-binding domain, RBD"/>
    <property type="match status" value="3"/>
</dbReference>
<dbReference type="PROSITE" id="PS51309">
    <property type="entry name" value="PABC"/>
    <property type="match status" value="1"/>
</dbReference>
<dbReference type="PROSITE" id="PS50102">
    <property type="entry name" value="RRM"/>
    <property type="match status" value="4"/>
</dbReference>
<organism>
    <name type="scientific">Aspergillus oryzae (strain ATCC 42149 / RIB 40)</name>
    <name type="common">Yellow koji mold</name>
    <dbReference type="NCBI Taxonomy" id="510516"/>
    <lineage>
        <taxon>Eukaryota</taxon>
        <taxon>Fungi</taxon>
        <taxon>Dikarya</taxon>
        <taxon>Ascomycota</taxon>
        <taxon>Pezizomycotina</taxon>
        <taxon>Eurotiomycetes</taxon>
        <taxon>Eurotiomycetidae</taxon>
        <taxon>Eurotiales</taxon>
        <taxon>Aspergillaceae</taxon>
        <taxon>Aspergillus</taxon>
        <taxon>Aspergillus subgen. Circumdati</taxon>
    </lineage>
</organism>
<sequence length="765" mass="83027">MSADASTTPAADSNVTSTPETSTTPAAPAPEVTAVESTTAPNASQPHSASLYVGELDPSVTEAMLYELFSSIGQVASIRVCRDAVTRRSLGYAYVNYNNTADGERALEDLNYTLIKGKPCRIMWSQRDPALRKTGQGNVFIKNLDSAIDNKALHDTFAAFGNILSCKVAQDEFGNSKGYGFVHYETAEAANNAIKHVNGMLLNDKKVFVGHHISKKDRQSKFEEMKANFTNVYIKNIDQDVTEEEFRELFEKFGEITSATLSRDQEGKSRGFGFVNFSTHESAQAAVDEMNEKEIRTQKLYVGRAQKKHEREEELRKQYEAARLEKASKYQGVNLYVKNLTDDVDDEKLRELFGPYGTITSAKVMRDTNIERTQTPESDKEKENKEATKENEKESSEAEKAEKTEEKPADSGDEKKEDKESKKADKKGLGKSKGFGFVCFSSPDEASKAVTEMNQRMVNGKPLYVALAQRKDVRRSQLEASIQARNTIRQQQAAAAAGMPQPYMQPAVFYGPGQQGFIPGQRGGIAFPPQPGMVMAGIPGGRPGQYPGPFPGQQGGRGMGPNQQLPPNFQGIPMGAMQGPVPNGMGYPQGMAQVQFGRGAGGRGQVPGMPNMGQGMRGPGYGQGRGGVPVQQGQMRPGQGGRGQNAAQAPAGRPEEAVAGGLTAQALSAAPPPQQKQMLGEALYPKIQAQQPELAGKITGMLLEMENTELLSLLEDEEALRAKVDEALNVYDEYMKNKGGESEATGEAAKPKEAAKETSTEENKS</sequence>
<proteinExistence type="inferred from homology"/>
<feature type="chain" id="PRO_0000295382" description="Polyadenylate-binding protein, cytoplasmic and nuclear">
    <location>
        <begin position="1"/>
        <end position="765"/>
    </location>
</feature>
<feature type="domain" description="RRM 1" evidence="2">
    <location>
        <begin position="49"/>
        <end position="127"/>
    </location>
</feature>
<feature type="domain" description="RRM 2" evidence="2">
    <location>
        <begin position="137"/>
        <end position="214"/>
    </location>
</feature>
<feature type="domain" description="RRM 3" evidence="2">
    <location>
        <begin position="230"/>
        <end position="307"/>
    </location>
</feature>
<feature type="domain" description="RRM 4" evidence="2">
    <location>
        <begin position="333"/>
        <end position="470"/>
    </location>
</feature>
<feature type="domain" description="PABC" evidence="3">
    <location>
        <begin position="659"/>
        <end position="736"/>
    </location>
</feature>
<feature type="region of interest" description="Disordered" evidence="4">
    <location>
        <begin position="1"/>
        <end position="49"/>
    </location>
</feature>
<feature type="region of interest" description="Disordered" evidence="4">
    <location>
        <begin position="364"/>
        <end position="427"/>
    </location>
</feature>
<feature type="region of interest" description="Disordered" evidence="4">
    <location>
        <begin position="619"/>
        <end position="657"/>
    </location>
</feature>
<feature type="region of interest" description="Disordered" evidence="4">
    <location>
        <begin position="737"/>
        <end position="765"/>
    </location>
</feature>
<feature type="compositionally biased region" description="Low complexity" evidence="4">
    <location>
        <begin position="1"/>
        <end position="37"/>
    </location>
</feature>
<feature type="compositionally biased region" description="Polar residues" evidence="4">
    <location>
        <begin position="38"/>
        <end position="48"/>
    </location>
</feature>
<feature type="compositionally biased region" description="Basic and acidic residues" evidence="4">
    <location>
        <begin position="377"/>
        <end position="427"/>
    </location>
</feature>
<feature type="compositionally biased region" description="Low complexity" evidence="4">
    <location>
        <begin position="628"/>
        <end position="637"/>
    </location>
</feature>
<feature type="compositionally biased region" description="Basic and acidic residues" evidence="4">
    <location>
        <begin position="749"/>
        <end position="765"/>
    </location>
</feature>